<gene>
    <name type="ordered locus">At5g46170</name>
    <name type="ORF">MCL19.23</name>
</gene>
<protein>
    <recommendedName>
        <fullName>F-box protein At5g46170</fullName>
    </recommendedName>
</protein>
<name>FB285_ARATH</name>
<sequence>MAVIIPRSDPPSRIHPEPPQTLEIDHFDHLPDSILLLVFNKIGDVKALGRCCVVSRRFHSLVPQVDNVVVRVDCVISDDDSSSLSSIKSRSGSSAGSFSAIFRLVVGGIVKPLQALGQFLGTKRSSSSCGGSGSSSSSLSISGDDDGGEIEQGGVTHHSPTQVLKNFDEIRYLRIELPSGELGIDDGVLLKWRAEFGSTLDNCVILGASSVIPPNPMRVSQACDTTTVVEAPGSGSDDNGSIPESFYTNGGLKLRVVWTISSLIAASARHYLLQPIIAEHKTLDSLVLTDSDGQGVLCMNRDQLEELRVKPLAASSASKRTLVPALNMRLWYAPTLELPDGTVLKGATLVAIRPSESKKEVSDISWVSSAFEEPYETAAKMLVKRRTYCLEMNSF</sequence>
<organism>
    <name type="scientific">Arabidopsis thaliana</name>
    <name type="common">Mouse-ear cress</name>
    <dbReference type="NCBI Taxonomy" id="3702"/>
    <lineage>
        <taxon>Eukaryota</taxon>
        <taxon>Viridiplantae</taxon>
        <taxon>Streptophyta</taxon>
        <taxon>Embryophyta</taxon>
        <taxon>Tracheophyta</taxon>
        <taxon>Spermatophyta</taxon>
        <taxon>Magnoliopsida</taxon>
        <taxon>eudicotyledons</taxon>
        <taxon>Gunneridae</taxon>
        <taxon>Pentapetalae</taxon>
        <taxon>rosids</taxon>
        <taxon>malvids</taxon>
        <taxon>Brassicales</taxon>
        <taxon>Brassicaceae</taxon>
        <taxon>Camelineae</taxon>
        <taxon>Arabidopsis</taxon>
    </lineage>
</organism>
<evidence type="ECO:0000256" key="1">
    <source>
        <dbReference type="SAM" id="MobiDB-lite"/>
    </source>
</evidence>
<feature type="chain" id="PRO_0000283551" description="F-box protein At5g46170">
    <location>
        <begin position="1"/>
        <end position="395"/>
    </location>
</feature>
<feature type="domain" description="F-box">
    <location>
        <begin position="24"/>
        <end position="72"/>
    </location>
</feature>
<feature type="region of interest" description="Disordered" evidence="1">
    <location>
        <begin position="122"/>
        <end position="158"/>
    </location>
</feature>
<feature type="compositionally biased region" description="Low complexity" evidence="1">
    <location>
        <begin position="125"/>
        <end position="142"/>
    </location>
</feature>
<reference key="1">
    <citation type="journal article" date="1997" name="DNA Res.">
        <title>Structural analysis of Arabidopsis thaliana chromosome 5. II. Sequence features of the regions of 1,044,062 bp covered by thirteen physically assigned P1 clones.</title>
        <authorList>
            <person name="Kotani H."/>
            <person name="Nakamura Y."/>
            <person name="Sato S."/>
            <person name="Kaneko T."/>
            <person name="Asamizu E."/>
            <person name="Miyajima N."/>
            <person name="Tabata S."/>
        </authorList>
    </citation>
    <scope>NUCLEOTIDE SEQUENCE [LARGE SCALE GENOMIC DNA]</scope>
    <source>
        <strain>cv. Columbia</strain>
    </source>
</reference>
<reference key="2">
    <citation type="journal article" date="2017" name="Plant J.">
        <title>Araport11: a complete reannotation of the Arabidopsis thaliana reference genome.</title>
        <authorList>
            <person name="Cheng C.Y."/>
            <person name="Krishnakumar V."/>
            <person name="Chan A.P."/>
            <person name="Thibaud-Nissen F."/>
            <person name="Schobel S."/>
            <person name="Town C.D."/>
        </authorList>
    </citation>
    <scope>GENOME REANNOTATION</scope>
    <source>
        <strain>cv. Columbia</strain>
    </source>
</reference>
<reference key="3">
    <citation type="journal article" date="2003" name="Science">
        <title>Empirical analysis of transcriptional activity in the Arabidopsis genome.</title>
        <authorList>
            <person name="Yamada K."/>
            <person name="Lim J."/>
            <person name="Dale J.M."/>
            <person name="Chen H."/>
            <person name="Shinn P."/>
            <person name="Palm C.J."/>
            <person name="Southwick A.M."/>
            <person name="Wu H.C."/>
            <person name="Kim C.J."/>
            <person name="Nguyen M."/>
            <person name="Pham P.K."/>
            <person name="Cheuk R.F."/>
            <person name="Karlin-Newmann G."/>
            <person name="Liu S.X."/>
            <person name="Lam B."/>
            <person name="Sakano H."/>
            <person name="Wu T."/>
            <person name="Yu G."/>
            <person name="Miranda M."/>
            <person name="Quach H.L."/>
            <person name="Tripp M."/>
            <person name="Chang C.H."/>
            <person name="Lee J.M."/>
            <person name="Toriumi M.J."/>
            <person name="Chan M.M."/>
            <person name="Tang C.C."/>
            <person name="Onodera C.S."/>
            <person name="Deng J.M."/>
            <person name="Akiyama K."/>
            <person name="Ansari Y."/>
            <person name="Arakawa T."/>
            <person name="Banh J."/>
            <person name="Banno F."/>
            <person name="Bowser L."/>
            <person name="Brooks S.Y."/>
            <person name="Carninci P."/>
            <person name="Chao Q."/>
            <person name="Choy N."/>
            <person name="Enju A."/>
            <person name="Goldsmith A.D."/>
            <person name="Gurjal M."/>
            <person name="Hansen N.F."/>
            <person name="Hayashizaki Y."/>
            <person name="Johnson-Hopson C."/>
            <person name="Hsuan V.W."/>
            <person name="Iida K."/>
            <person name="Karnes M."/>
            <person name="Khan S."/>
            <person name="Koesema E."/>
            <person name="Ishida J."/>
            <person name="Jiang P.X."/>
            <person name="Jones T."/>
            <person name="Kawai J."/>
            <person name="Kamiya A."/>
            <person name="Meyers C."/>
            <person name="Nakajima M."/>
            <person name="Narusaka M."/>
            <person name="Seki M."/>
            <person name="Sakurai T."/>
            <person name="Satou M."/>
            <person name="Tamse R."/>
            <person name="Vaysberg M."/>
            <person name="Wallender E.K."/>
            <person name="Wong C."/>
            <person name="Yamamura Y."/>
            <person name="Yuan S."/>
            <person name="Shinozaki K."/>
            <person name="Davis R.W."/>
            <person name="Theologis A."/>
            <person name="Ecker J.R."/>
        </authorList>
    </citation>
    <scope>NUCLEOTIDE SEQUENCE [LARGE SCALE MRNA]</scope>
    <source>
        <strain>cv. Columbia</strain>
    </source>
</reference>
<proteinExistence type="evidence at transcript level"/>
<dbReference type="EMBL" id="AB006698">
    <property type="protein sequence ID" value="BAB08262.1"/>
    <property type="molecule type" value="Genomic_DNA"/>
</dbReference>
<dbReference type="EMBL" id="CP002688">
    <property type="protein sequence ID" value="AED95349.1"/>
    <property type="molecule type" value="Genomic_DNA"/>
</dbReference>
<dbReference type="EMBL" id="AY070105">
    <property type="protein sequence ID" value="AAL49842.1"/>
    <property type="molecule type" value="mRNA"/>
</dbReference>
<dbReference type="EMBL" id="AY142657">
    <property type="protein sequence ID" value="AAN13195.1"/>
    <property type="molecule type" value="mRNA"/>
</dbReference>
<dbReference type="RefSeq" id="NP_199429.1">
    <property type="nucleotide sequence ID" value="NM_123986.4"/>
</dbReference>
<dbReference type="BioGRID" id="19908">
    <property type="interactions" value="1"/>
</dbReference>
<dbReference type="FunCoup" id="Q9FNK5">
    <property type="interactions" value="1348"/>
</dbReference>
<dbReference type="IntAct" id="Q9FNK5">
    <property type="interactions" value="1"/>
</dbReference>
<dbReference type="PaxDb" id="3702-AT5G46170.1"/>
<dbReference type="ProteomicsDB" id="230763"/>
<dbReference type="EnsemblPlants" id="AT5G46170.1">
    <property type="protein sequence ID" value="AT5G46170.1"/>
    <property type="gene ID" value="AT5G46170"/>
</dbReference>
<dbReference type="GeneID" id="834659"/>
<dbReference type="Gramene" id="AT5G46170.1">
    <property type="protein sequence ID" value="AT5G46170.1"/>
    <property type="gene ID" value="AT5G46170"/>
</dbReference>
<dbReference type="KEGG" id="ath:AT5G46170"/>
<dbReference type="Araport" id="AT5G46170"/>
<dbReference type="TAIR" id="AT5G46170"/>
<dbReference type="eggNOG" id="ENOG502QTRT">
    <property type="taxonomic scope" value="Eukaryota"/>
</dbReference>
<dbReference type="HOGENOM" id="CLU_049279_2_0_1"/>
<dbReference type="InParanoid" id="Q9FNK5"/>
<dbReference type="OMA" id="IQPNPMR"/>
<dbReference type="OrthoDB" id="660108at2759"/>
<dbReference type="PhylomeDB" id="Q9FNK5"/>
<dbReference type="PRO" id="PR:Q9FNK5"/>
<dbReference type="Proteomes" id="UP000006548">
    <property type="component" value="Chromosome 5"/>
</dbReference>
<dbReference type="ExpressionAtlas" id="Q9FNK5">
    <property type="expression patterns" value="baseline and differential"/>
</dbReference>
<dbReference type="GO" id="GO:0010286">
    <property type="term" value="P:heat acclimation"/>
    <property type="evidence" value="ECO:0000270"/>
    <property type="project" value="TAIR"/>
</dbReference>
<dbReference type="Gene3D" id="1.20.1280.50">
    <property type="match status" value="1"/>
</dbReference>
<dbReference type="InterPro" id="IPR044809">
    <property type="entry name" value="AUF1-like"/>
</dbReference>
<dbReference type="InterPro" id="IPR036047">
    <property type="entry name" value="F-box-like_dom_sf"/>
</dbReference>
<dbReference type="InterPro" id="IPR001810">
    <property type="entry name" value="F-box_dom"/>
</dbReference>
<dbReference type="PANTHER" id="PTHR31215">
    <property type="entry name" value="OS05G0510400 PROTEIN-RELATED"/>
    <property type="match status" value="1"/>
</dbReference>
<dbReference type="Pfam" id="PF12937">
    <property type="entry name" value="F-box-like"/>
    <property type="match status" value="1"/>
</dbReference>
<dbReference type="SUPFAM" id="SSF81383">
    <property type="entry name" value="F-box domain"/>
    <property type="match status" value="1"/>
</dbReference>
<keyword id="KW-1185">Reference proteome</keyword>
<accession>Q9FNK5</accession>